<keyword id="KW-0378">Hydrolase</keyword>
<keyword id="KW-0546">Nucleotide metabolism</keyword>
<keyword id="KW-0547">Nucleotide-binding</keyword>
<protein>
    <recommendedName>
        <fullName evidence="1">dCTP deaminase, dUMP-forming</fullName>
        <ecNumber evidence="1">3.5.4.30</ecNumber>
    </recommendedName>
    <alternativeName>
        <fullName evidence="1">Bifunctional dCTP deaminase:dUTPase</fullName>
    </alternativeName>
    <alternativeName>
        <fullName evidence="1">DCD-DUT</fullName>
    </alternativeName>
</protein>
<evidence type="ECO:0000255" key="1">
    <source>
        <dbReference type="HAMAP-Rule" id="MF_00146"/>
    </source>
</evidence>
<accession>Q04X69</accession>
<dbReference type="EC" id="3.5.4.30" evidence="1"/>
<dbReference type="EMBL" id="CP000348">
    <property type="protein sequence ID" value="ABJ80326.1"/>
    <property type="molecule type" value="Genomic_DNA"/>
</dbReference>
<dbReference type="RefSeq" id="WP_011671221.1">
    <property type="nucleotide sequence ID" value="NC_008508.1"/>
</dbReference>
<dbReference type="SMR" id="Q04X69"/>
<dbReference type="KEGG" id="lbl:LBL_3016"/>
<dbReference type="HOGENOM" id="CLU_087476_0_1_12"/>
<dbReference type="UniPathway" id="UPA00610">
    <property type="reaction ID" value="UER00667"/>
</dbReference>
<dbReference type="GO" id="GO:0033973">
    <property type="term" value="F:dCTP deaminase (dUMP-forming) activity"/>
    <property type="evidence" value="ECO:0007669"/>
    <property type="project" value="UniProtKB-UniRule"/>
</dbReference>
<dbReference type="GO" id="GO:0008829">
    <property type="term" value="F:dCTP deaminase activity"/>
    <property type="evidence" value="ECO:0007669"/>
    <property type="project" value="InterPro"/>
</dbReference>
<dbReference type="GO" id="GO:0000166">
    <property type="term" value="F:nucleotide binding"/>
    <property type="evidence" value="ECO:0007669"/>
    <property type="project" value="UniProtKB-KW"/>
</dbReference>
<dbReference type="GO" id="GO:0006226">
    <property type="term" value="P:dUMP biosynthetic process"/>
    <property type="evidence" value="ECO:0007669"/>
    <property type="project" value="UniProtKB-UniRule"/>
</dbReference>
<dbReference type="GO" id="GO:0006229">
    <property type="term" value="P:dUTP biosynthetic process"/>
    <property type="evidence" value="ECO:0007669"/>
    <property type="project" value="InterPro"/>
</dbReference>
<dbReference type="GO" id="GO:0015949">
    <property type="term" value="P:nucleobase-containing small molecule interconversion"/>
    <property type="evidence" value="ECO:0007669"/>
    <property type="project" value="TreeGrafter"/>
</dbReference>
<dbReference type="CDD" id="cd07557">
    <property type="entry name" value="trimeric_dUTPase"/>
    <property type="match status" value="1"/>
</dbReference>
<dbReference type="FunFam" id="2.70.40.10:FF:000009">
    <property type="entry name" value="dCTP deaminase, dUMP-forming"/>
    <property type="match status" value="1"/>
</dbReference>
<dbReference type="Gene3D" id="2.70.40.10">
    <property type="match status" value="1"/>
</dbReference>
<dbReference type="HAMAP" id="MF_00146">
    <property type="entry name" value="dCTP_deaminase"/>
    <property type="match status" value="1"/>
</dbReference>
<dbReference type="InterPro" id="IPR011962">
    <property type="entry name" value="dCTP_deaminase"/>
</dbReference>
<dbReference type="InterPro" id="IPR036157">
    <property type="entry name" value="dUTPase-like_sf"/>
</dbReference>
<dbReference type="InterPro" id="IPR033704">
    <property type="entry name" value="dUTPase_trimeric"/>
</dbReference>
<dbReference type="NCBIfam" id="TIGR02274">
    <property type="entry name" value="dCTP_deam"/>
    <property type="match status" value="1"/>
</dbReference>
<dbReference type="PANTHER" id="PTHR42680">
    <property type="entry name" value="DCTP DEAMINASE"/>
    <property type="match status" value="1"/>
</dbReference>
<dbReference type="PANTHER" id="PTHR42680:SF3">
    <property type="entry name" value="DCTP DEAMINASE"/>
    <property type="match status" value="1"/>
</dbReference>
<dbReference type="Pfam" id="PF22769">
    <property type="entry name" value="DCD"/>
    <property type="match status" value="1"/>
</dbReference>
<dbReference type="SUPFAM" id="SSF51283">
    <property type="entry name" value="dUTPase-like"/>
    <property type="match status" value="1"/>
</dbReference>
<organism>
    <name type="scientific">Leptospira borgpetersenii serovar Hardjo-bovis (strain L550)</name>
    <dbReference type="NCBI Taxonomy" id="355276"/>
    <lineage>
        <taxon>Bacteria</taxon>
        <taxon>Pseudomonadati</taxon>
        <taxon>Spirochaetota</taxon>
        <taxon>Spirochaetia</taxon>
        <taxon>Leptospirales</taxon>
        <taxon>Leptospiraceae</taxon>
        <taxon>Leptospira</taxon>
    </lineage>
</organism>
<name>DCDB_LEPBL</name>
<reference key="1">
    <citation type="journal article" date="2006" name="Proc. Natl. Acad. Sci. U.S.A.">
        <title>Genome reduction in Leptospira borgpetersenii reflects limited transmission potential.</title>
        <authorList>
            <person name="Bulach D.M."/>
            <person name="Zuerner R.L."/>
            <person name="Wilson P."/>
            <person name="Seemann T."/>
            <person name="McGrath A."/>
            <person name="Cullen P.A."/>
            <person name="Davis J."/>
            <person name="Johnson M."/>
            <person name="Kuczek E."/>
            <person name="Alt D.P."/>
            <person name="Peterson-Burch B."/>
            <person name="Coppel R.L."/>
            <person name="Rood J.I."/>
            <person name="Davies J.K."/>
            <person name="Adler B."/>
        </authorList>
    </citation>
    <scope>NUCLEOTIDE SEQUENCE [LARGE SCALE GENOMIC DNA]</scope>
    <source>
        <strain>L550</strain>
    </source>
</reference>
<gene>
    <name evidence="1" type="primary">dcd</name>
    <name type="ordered locus">LBL_3016</name>
</gene>
<proteinExistence type="inferred from homology"/>
<feature type="chain" id="PRO_1000117978" description="dCTP deaminase, dUMP-forming">
    <location>
        <begin position="1"/>
        <end position="173"/>
    </location>
</feature>
<feature type="active site" description="Proton donor/acceptor" evidence="1">
    <location>
        <position position="121"/>
    </location>
</feature>
<feature type="binding site" evidence="1">
    <location>
        <begin position="93"/>
        <end position="98"/>
    </location>
    <ligand>
        <name>dCTP</name>
        <dbReference type="ChEBI" id="CHEBI:61481"/>
    </ligand>
</feature>
<feature type="binding site" evidence="1">
    <location>
        <position position="111"/>
    </location>
    <ligand>
        <name>dCTP</name>
        <dbReference type="ChEBI" id="CHEBI:61481"/>
    </ligand>
</feature>
<feature type="binding site" evidence="1">
    <location>
        <begin position="119"/>
        <end position="121"/>
    </location>
    <ligand>
        <name>dCTP</name>
        <dbReference type="ChEBI" id="CHEBI:61481"/>
    </ligand>
</feature>
<feature type="binding site" evidence="1">
    <location>
        <position position="138"/>
    </location>
    <ligand>
        <name>dCTP</name>
        <dbReference type="ChEBI" id="CHEBI:61481"/>
    </ligand>
</feature>
<feature type="site" description="Important for bifunctional activity" evidence="1">
    <location>
        <begin position="108"/>
        <end position="109"/>
    </location>
</feature>
<sequence length="173" mass="19695">MILTGKEIQKRIGKDIIITPYSEKQLNPNSYNLRLHEELLIYTELPLDMKKPNLTKKQIIPESGLLLKPGILYLGRTLEFTETHHLVPMLEGRSSIGRLGMLVHVTAGFGDVGFKGFWTLEISVIQPLIVYPGVEVCQIFYHTLEGQITEYTSGKYQANQGIQPSMLYQDFEK</sequence>
<comment type="function">
    <text evidence="1">Bifunctional enzyme that catalyzes both the deamination of dCTP to dUTP and the hydrolysis of dUTP to dUMP without releasing the toxic dUTP intermediate.</text>
</comment>
<comment type="catalytic activity">
    <reaction evidence="1">
        <text>dCTP + 2 H2O = dUMP + NH4(+) + diphosphate</text>
        <dbReference type="Rhea" id="RHEA:19205"/>
        <dbReference type="ChEBI" id="CHEBI:15377"/>
        <dbReference type="ChEBI" id="CHEBI:28938"/>
        <dbReference type="ChEBI" id="CHEBI:33019"/>
        <dbReference type="ChEBI" id="CHEBI:61481"/>
        <dbReference type="ChEBI" id="CHEBI:246422"/>
        <dbReference type="EC" id="3.5.4.30"/>
    </reaction>
</comment>
<comment type="pathway">
    <text evidence="1">Pyrimidine metabolism; dUMP biosynthesis; dUMP from dCTP: step 1/1.</text>
</comment>
<comment type="subunit">
    <text evidence="1">Homotrimer.</text>
</comment>
<comment type="similarity">
    <text evidence="1">Belongs to the dCTP deaminase family.</text>
</comment>